<organism>
    <name type="scientific">Arabidopsis thaliana</name>
    <name type="common">Mouse-ear cress</name>
    <dbReference type="NCBI Taxonomy" id="3702"/>
    <lineage>
        <taxon>Eukaryota</taxon>
        <taxon>Viridiplantae</taxon>
        <taxon>Streptophyta</taxon>
        <taxon>Embryophyta</taxon>
        <taxon>Tracheophyta</taxon>
        <taxon>Spermatophyta</taxon>
        <taxon>Magnoliopsida</taxon>
        <taxon>eudicotyledons</taxon>
        <taxon>Gunneridae</taxon>
        <taxon>Pentapetalae</taxon>
        <taxon>rosids</taxon>
        <taxon>malvids</taxon>
        <taxon>Brassicales</taxon>
        <taxon>Brassicaceae</taxon>
        <taxon>Camelineae</taxon>
        <taxon>Arabidopsis</taxon>
    </lineage>
</organism>
<sequence length="614" mass="68642">MKQSSVVDLLLLLLAIALLATPAFSDLVLSKVERRIDVTSQIARVTKTLKVVNSGSESVSEFALTFPKFLGNNLAYLSVAPSEGKGKSKRTLVNLSVREADQKGLPDSISVYSVALPKPLSKGDTLTLEVVAAFTNVLQPFPEKITQGEIHLVMLQESAQYLSPYAVESQSLSIKLPNARIESYTKFENTKLQGSELKYGPYKNLQSYSYSPIVVHFESKAAFAVAEKLVREIEVSHWGNVQVTENYNVVHRGAQLKGEFSRLDFQARPNPRGASAFRHLLARLPPRAHSIYYRDDIGNISTSEMKSDSKKTELLIEPRFPLFGGWKTFFTIGYGLPLTDFLFASEGKRFLNISFGSPILDLVTEKLIVQVVLPEGSKDISVTTPFAVKQSQEIKYSHLDIAGRPVVVLEKNNVVPDHNQHIQVYYKFSNINLLSEPLMLISGFFILFITCIIYTRADISISKSSPSYLAKLQWDEVLATLQEVQSIVQKCLATHDKLEASLRDLSRTGDIQTCKAARKSTDSLLKDLSKELKPLLGFLQSFPSASHISPKVEELVVKEKELQEKLMAKHTTVVEGYEKKSSGRDIENRIASQQQKIIALRQEIEDLLEFIDEI</sequence>
<proteinExistence type="evidence at transcript level"/>
<feature type="signal peptide" evidence="4">
    <location>
        <begin position="1"/>
        <end position="25"/>
    </location>
</feature>
<feature type="chain" id="PRO_0000420806" description="Dolichyl-diphosphooligosaccharide--protein glycosyltransferase subunit 1A">
    <location>
        <begin position="26"/>
        <end position="614"/>
    </location>
</feature>
<feature type="topological domain" description="Lumenal" evidence="4">
    <location>
        <begin position="26"/>
        <end position="432"/>
    </location>
</feature>
<feature type="transmembrane region" description="Helical" evidence="4">
    <location>
        <begin position="433"/>
        <end position="453"/>
    </location>
</feature>
<feature type="topological domain" description="Cytoplasmic" evidence="4">
    <location>
        <begin position="454"/>
        <end position="614"/>
    </location>
</feature>
<feature type="glycosylation site" description="N-linked (GlcNAc...) asparagine" evidence="4">
    <location>
        <position position="94"/>
    </location>
</feature>
<feature type="glycosylation site" description="N-linked (GlcNAc...) asparagine" evidence="4">
    <location>
        <position position="299"/>
    </location>
</feature>
<feature type="glycosylation site" description="N-linked (GlcNAc...) asparagine" evidence="4">
    <location>
        <position position="352"/>
    </location>
</feature>
<feature type="cross-link" description="Glycyl lysine isopeptide (Lys-Gly) (interchain with G-Cter in ubiquitin)" evidence="3">
    <location>
        <position position="311"/>
    </location>
</feature>
<accession>Q9SFX3</accession>
<accession>Q8H795</accession>
<reference key="1">
    <citation type="journal article" date="2000" name="Nature">
        <title>Sequence and analysis of chromosome 1 of the plant Arabidopsis thaliana.</title>
        <authorList>
            <person name="Theologis A."/>
            <person name="Ecker J.R."/>
            <person name="Palm C.J."/>
            <person name="Federspiel N.A."/>
            <person name="Kaul S."/>
            <person name="White O."/>
            <person name="Alonso J."/>
            <person name="Altafi H."/>
            <person name="Araujo R."/>
            <person name="Bowman C.L."/>
            <person name="Brooks S.Y."/>
            <person name="Buehler E."/>
            <person name="Chan A."/>
            <person name="Chao Q."/>
            <person name="Chen H."/>
            <person name="Cheuk R.F."/>
            <person name="Chin C.W."/>
            <person name="Chung M.K."/>
            <person name="Conn L."/>
            <person name="Conway A.B."/>
            <person name="Conway A.R."/>
            <person name="Creasy T.H."/>
            <person name="Dewar K."/>
            <person name="Dunn P."/>
            <person name="Etgu P."/>
            <person name="Feldblyum T.V."/>
            <person name="Feng J.-D."/>
            <person name="Fong B."/>
            <person name="Fujii C.Y."/>
            <person name="Gill J.E."/>
            <person name="Goldsmith A.D."/>
            <person name="Haas B."/>
            <person name="Hansen N.F."/>
            <person name="Hughes B."/>
            <person name="Huizar L."/>
            <person name="Hunter J.L."/>
            <person name="Jenkins J."/>
            <person name="Johnson-Hopson C."/>
            <person name="Khan S."/>
            <person name="Khaykin E."/>
            <person name="Kim C.J."/>
            <person name="Koo H.L."/>
            <person name="Kremenetskaia I."/>
            <person name="Kurtz D.B."/>
            <person name="Kwan A."/>
            <person name="Lam B."/>
            <person name="Langin-Hooper S."/>
            <person name="Lee A."/>
            <person name="Lee J.M."/>
            <person name="Lenz C.A."/>
            <person name="Li J.H."/>
            <person name="Li Y.-P."/>
            <person name="Lin X."/>
            <person name="Liu S.X."/>
            <person name="Liu Z.A."/>
            <person name="Luros J.S."/>
            <person name="Maiti R."/>
            <person name="Marziali A."/>
            <person name="Militscher J."/>
            <person name="Miranda M."/>
            <person name="Nguyen M."/>
            <person name="Nierman W.C."/>
            <person name="Osborne B.I."/>
            <person name="Pai G."/>
            <person name="Peterson J."/>
            <person name="Pham P.K."/>
            <person name="Rizzo M."/>
            <person name="Rooney T."/>
            <person name="Rowley D."/>
            <person name="Sakano H."/>
            <person name="Salzberg S.L."/>
            <person name="Schwartz J.R."/>
            <person name="Shinn P."/>
            <person name="Southwick A.M."/>
            <person name="Sun H."/>
            <person name="Tallon L.J."/>
            <person name="Tambunga G."/>
            <person name="Toriumi M.J."/>
            <person name="Town C.D."/>
            <person name="Utterback T."/>
            <person name="Van Aken S."/>
            <person name="Vaysberg M."/>
            <person name="Vysotskaia V.S."/>
            <person name="Walker M."/>
            <person name="Wu D."/>
            <person name="Yu G."/>
            <person name="Fraser C.M."/>
            <person name="Venter J.C."/>
            <person name="Davis R.W."/>
        </authorList>
    </citation>
    <scope>NUCLEOTIDE SEQUENCE [LARGE SCALE GENOMIC DNA]</scope>
    <source>
        <strain>cv. Columbia</strain>
    </source>
</reference>
<reference key="2">
    <citation type="journal article" date="2017" name="Plant J.">
        <title>Araport11: a complete reannotation of the Arabidopsis thaliana reference genome.</title>
        <authorList>
            <person name="Cheng C.Y."/>
            <person name="Krishnakumar V."/>
            <person name="Chan A.P."/>
            <person name="Thibaud-Nissen F."/>
            <person name="Schobel S."/>
            <person name="Town C.D."/>
        </authorList>
    </citation>
    <scope>GENOME REANNOTATION</scope>
    <source>
        <strain>cv. Columbia</strain>
    </source>
</reference>
<reference key="3">
    <citation type="journal article" date="2003" name="Science">
        <title>Empirical analysis of transcriptional activity in the Arabidopsis genome.</title>
        <authorList>
            <person name="Yamada K."/>
            <person name="Lim J."/>
            <person name="Dale J.M."/>
            <person name="Chen H."/>
            <person name="Shinn P."/>
            <person name="Palm C.J."/>
            <person name="Southwick A.M."/>
            <person name="Wu H.C."/>
            <person name="Kim C.J."/>
            <person name="Nguyen M."/>
            <person name="Pham P.K."/>
            <person name="Cheuk R.F."/>
            <person name="Karlin-Newmann G."/>
            <person name="Liu S.X."/>
            <person name="Lam B."/>
            <person name="Sakano H."/>
            <person name="Wu T."/>
            <person name="Yu G."/>
            <person name="Miranda M."/>
            <person name="Quach H.L."/>
            <person name="Tripp M."/>
            <person name="Chang C.H."/>
            <person name="Lee J.M."/>
            <person name="Toriumi M.J."/>
            <person name="Chan M.M."/>
            <person name="Tang C.C."/>
            <person name="Onodera C.S."/>
            <person name="Deng J.M."/>
            <person name="Akiyama K."/>
            <person name="Ansari Y."/>
            <person name="Arakawa T."/>
            <person name="Banh J."/>
            <person name="Banno F."/>
            <person name="Bowser L."/>
            <person name="Brooks S.Y."/>
            <person name="Carninci P."/>
            <person name="Chao Q."/>
            <person name="Choy N."/>
            <person name="Enju A."/>
            <person name="Goldsmith A.D."/>
            <person name="Gurjal M."/>
            <person name="Hansen N.F."/>
            <person name="Hayashizaki Y."/>
            <person name="Johnson-Hopson C."/>
            <person name="Hsuan V.W."/>
            <person name="Iida K."/>
            <person name="Karnes M."/>
            <person name="Khan S."/>
            <person name="Koesema E."/>
            <person name="Ishida J."/>
            <person name="Jiang P.X."/>
            <person name="Jones T."/>
            <person name="Kawai J."/>
            <person name="Kamiya A."/>
            <person name="Meyers C."/>
            <person name="Nakajima M."/>
            <person name="Narusaka M."/>
            <person name="Seki M."/>
            <person name="Sakurai T."/>
            <person name="Satou M."/>
            <person name="Tamse R."/>
            <person name="Vaysberg M."/>
            <person name="Wallender E.K."/>
            <person name="Wong C."/>
            <person name="Yamamura Y."/>
            <person name="Yuan S."/>
            <person name="Shinozaki K."/>
            <person name="Davis R.W."/>
            <person name="Theologis A."/>
            <person name="Ecker J.R."/>
        </authorList>
    </citation>
    <scope>NUCLEOTIDE SEQUENCE [LARGE SCALE MRNA]</scope>
    <source>
        <strain>cv. Columbia</strain>
    </source>
</reference>
<name>OST1A_ARATH</name>
<gene>
    <name type="primary">OST1A</name>
    <name type="synonym">RPN1A</name>
    <name type="ordered locus">At1g76400</name>
    <name type="ORF">F15M4.10</name>
</gene>
<dbReference type="EMBL" id="AC012394">
    <property type="protein sequence ID" value="AAF16661.1"/>
    <property type="molecule type" value="Genomic_DNA"/>
</dbReference>
<dbReference type="EMBL" id="CP002684">
    <property type="protein sequence ID" value="AEE35835.1"/>
    <property type="molecule type" value="Genomic_DNA"/>
</dbReference>
<dbReference type="EMBL" id="AY081297">
    <property type="protein sequence ID" value="AAL91186.1"/>
    <property type="molecule type" value="mRNA"/>
</dbReference>
<dbReference type="EMBL" id="AF083780">
    <property type="protein sequence ID" value="AAN60338.1"/>
    <property type="molecule type" value="mRNA"/>
</dbReference>
<dbReference type="EMBL" id="AY128779">
    <property type="protein sequence ID" value="AAM91179.1"/>
    <property type="molecule type" value="mRNA"/>
</dbReference>
<dbReference type="EMBL" id="AY139776">
    <property type="protein sequence ID" value="AAM98094.1"/>
    <property type="molecule type" value="mRNA"/>
</dbReference>
<dbReference type="PIR" id="F96791">
    <property type="entry name" value="F96791"/>
</dbReference>
<dbReference type="RefSeq" id="NP_177766.1">
    <property type="nucleotide sequence ID" value="NM_106289.4"/>
</dbReference>
<dbReference type="SMR" id="Q9SFX3"/>
<dbReference type="BioGRID" id="29191">
    <property type="interactions" value="23"/>
</dbReference>
<dbReference type="FunCoup" id="Q9SFX3">
    <property type="interactions" value="4795"/>
</dbReference>
<dbReference type="STRING" id="3702.Q9SFX3"/>
<dbReference type="GlyCosmos" id="Q9SFX3">
    <property type="glycosylation" value="3 sites, No reported glycans"/>
</dbReference>
<dbReference type="GlyGen" id="Q9SFX3">
    <property type="glycosylation" value="3 sites"/>
</dbReference>
<dbReference type="iPTMnet" id="Q9SFX3"/>
<dbReference type="PaxDb" id="3702-AT1G76400.1"/>
<dbReference type="ProteomicsDB" id="248774"/>
<dbReference type="EnsemblPlants" id="AT1G76400.1">
    <property type="protein sequence ID" value="AT1G76400.1"/>
    <property type="gene ID" value="AT1G76400"/>
</dbReference>
<dbReference type="GeneID" id="843972"/>
<dbReference type="Gramene" id="AT1G76400.1">
    <property type="protein sequence ID" value="AT1G76400.1"/>
    <property type="gene ID" value="AT1G76400"/>
</dbReference>
<dbReference type="KEGG" id="ath:AT1G76400"/>
<dbReference type="Araport" id="AT1G76400"/>
<dbReference type="TAIR" id="AT1G76400">
    <property type="gene designation" value="OST1B"/>
</dbReference>
<dbReference type="eggNOG" id="KOG2291">
    <property type="taxonomic scope" value="Eukaryota"/>
</dbReference>
<dbReference type="HOGENOM" id="CLU_031381_2_0_1"/>
<dbReference type="InParanoid" id="Q9SFX3"/>
<dbReference type="PhylomeDB" id="Q9SFX3"/>
<dbReference type="UniPathway" id="UPA00378"/>
<dbReference type="CD-CODE" id="4299E36E">
    <property type="entry name" value="Nucleolus"/>
</dbReference>
<dbReference type="PRO" id="PR:Q9SFX3"/>
<dbReference type="Proteomes" id="UP000006548">
    <property type="component" value="Chromosome 1"/>
</dbReference>
<dbReference type="ExpressionAtlas" id="Q9SFX3">
    <property type="expression patterns" value="baseline and differential"/>
</dbReference>
<dbReference type="GO" id="GO:0005783">
    <property type="term" value="C:endoplasmic reticulum"/>
    <property type="evidence" value="ECO:0000314"/>
    <property type="project" value="TAIR"/>
</dbReference>
<dbReference type="GO" id="GO:0005789">
    <property type="term" value="C:endoplasmic reticulum membrane"/>
    <property type="evidence" value="ECO:0007669"/>
    <property type="project" value="UniProtKB-SubCell"/>
</dbReference>
<dbReference type="GO" id="GO:0005739">
    <property type="term" value="C:mitochondrion"/>
    <property type="evidence" value="ECO:0007005"/>
    <property type="project" value="TAIR"/>
</dbReference>
<dbReference type="GO" id="GO:0006487">
    <property type="term" value="P:protein N-linked glycosylation"/>
    <property type="evidence" value="ECO:0000315"/>
    <property type="project" value="TAIR"/>
</dbReference>
<dbReference type="InterPro" id="IPR007676">
    <property type="entry name" value="Ribophorin_I"/>
</dbReference>
<dbReference type="PANTHER" id="PTHR21049:SF0">
    <property type="entry name" value="DOLICHYL-DIPHOSPHOOLIGOSACCHARIDE--PROTEIN GLYCOSYLTRANSFERASE SUBUNIT 1"/>
    <property type="match status" value="1"/>
</dbReference>
<dbReference type="PANTHER" id="PTHR21049">
    <property type="entry name" value="RIBOPHORIN I"/>
    <property type="match status" value="1"/>
</dbReference>
<dbReference type="Pfam" id="PF04597">
    <property type="entry name" value="Ribophorin_I"/>
    <property type="match status" value="1"/>
</dbReference>
<comment type="function">
    <text evidence="2">Subunit of the oligosaccharyl transferase (OST) complex that catalyzes the initial transfer of a defined glycan (Glc(3)Man(9)GlcNAc(2) in eukaryotes) from the lipid carrier dolichol-pyrophosphate to an asparagine residue within an Asn-X-Ser/Thr consensus motif in nascent polypeptide chains, the first step in protein N-glycosylation. N-glycosylation occurs cotranslationally and the complex associates with the Sec61 complex at the channel-forming translocon complex that mediates protein translocation across the endoplasmic reticulum (ER). All subunits are required for a maximal enzyme activity.</text>
</comment>
<comment type="pathway">
    <text>Protein modification; protein glycosylation.</text>
</comment>
<comment type="subunit">
    <text evidence="2">Component of the oligosaccharyltransferase (OST) complex.</text>
</comment>
<comment type="subcellular location">
    <subcellularLocation>
        <location evidence="1">Endoplasmic reticulum membrane</location>
        <topology evidence="1">Single-pass type I membrane protein</topology>
    </subcellularLocation>
</comment>
<comment type="similarity">
    <text evidence="5">Belongs to the OST1 family.</text>
</comment>
<protein>
    <recommendedName>
        <fullName>Dolichyl-diphosphooligosaccharide--protein glycosyltransferase subunit 1A</fullName>
    </recommendedName>
    <alternativeName>
        <fullName>Ribophorin IA</fullName>
        <shortName>RPN-IA</shortName>
    </alternativeName>
    <alternativeName>
        <fullName>Ribophorin-1A</fullName>
    </alternativeName>
</protein>
<keyword id="KW-0256">Endoplasmic reticulum</keyword>
<keyword id="KW-0325">Glycoprotein</keyword>
<keyword id="KW-1017">Isopeptide bond</keyword>
<keyword id="KW-0472">Membrane</keyword>
<keyword id="KW-1185">Reference proteome</keyword>
<keyword id="KW-0732">Signal</keyword>
<keyword id="KW-0812">Transmembrane</keyword>
<keyword id="KW-1133">Transmembrane helix</keyword>
<keyword id="KW-0832">Ubl conjugation</keyword>
<evidence type="ECO:0000250" key="1"/>
<evidence type="ECO:0000250" key="2">
    <source>
        <dbReference type="UniProtKB" id="P41543"/>
    </source>
</evidence>
<evidence type="ECO:0000250" key="3">
    <source>
        <dbReference type="UniProtKB" id="Q9ZUA0"/>
    </source>
</evidence>
<evidence type="ECO:0000255" key="4"/>
<evidence type="ECO:0000305" key="5"/>